<feature type="chain" id="PRO_0000093685" description="Inosine-5'-monophosphate dehydrogenase">
    <location>
        <begin position="1"/>
        <end position="521"/>
    </location>
</feature>
<feature type="domain" description="CBS 1" evidence="1">
    <location>
        <begin position="119"/>
        <end position="178"/>
    </location>
</feature>
<feature type="domain" description="CBS 2" evidence="1">
    <location>
        <begin position="182"/>
        <end position="238"/>
    </location>
</feature>
<feature type="active site" description="Thioimidate intermediate" evidence="1">
    <location>
        <position position="333"/>
    </location>
</feature>
<feature type="active site" description="Proton acceptor" evidence="1">
    <location>
        <position position="435"/>
    </location>
</feature>
<feature type="binding site" evidence="1">
    <location>
        <begin position="276"/>
        <end position="278"/>
    </location>
    <ligand>
        <name>NAD(+)</name>
        <dbReference type="ChEBI" id="CHEBI:57540"/>
    </ligand>
</feature>
<feature type="binding site" evidence="1">
    <location>
        <begin position="326"/>
        <end position="328"/>
    </location>
    <ligand>
        <name>NAD(+)</name>
        <dbReference type="ChEBI" id="CHEBI:57540"/>
    </ligand>
</feature>
<feature type="binding site" description="in other chain" evidence="1">
    <location>
        <position position="328"/>
    </location>
    <ligand>
        <name>K(+)</name>
        <dbReference type="ChEBI" id="CHEBI:29103"/>
        <note>ligand shared between two tetrameric partners</note>
    </ligand>
</feature>
<feature type="binding site" description="in other chain" evidence="1">
    <location>
        <position position="330"/>
    </location>
    <ligand>
        <name>K(+)</name>
        <dbReference type="ChEBI" id="CHEBI:29103"/>
        <note>ligand shared between two tetrameric partners</note>
    </ligand>
</feature>
<feature type="binding site" evidence="1">
    <location>
        <position position="331"/>
    </location>
    <ligand>
        <name>IMP</name>
        <dbReference type="ChEBI" id="CHEBI:58053"/>
    </ligand>
</feature>
<feature type="binding site" description="in other chain" evidence="1">
    <location>
        <position position="333"/>
    </location>
    <ligand>
        <name>K(+)</name>
        <dbReference type="ChEBI" id="CHEBI:29103"/>
        <note>ligand shared between two tetrameric partners</note>
    </ligand>
</feature>
<feature type="binding site" evidence="1">
    <location>
        <begin position="366"/>
        <end position="368"/>
    </location>
    <ligand>
        <name>IMP</name>
        <dbReference type="ChEBI" id="CHEBI:58053"/>
    </ligand>
</feature>
<feature type="binding site" evidence="1">
    <location>
        <begin position="389"/>
        <end position="390"/>
    </location>
    <ligand>
        <name>IMP</name>
        <dbReference type="ChEBI" id="CHEBI:58053"/>
    </ligand>
</feature>
<feature type="binding site" evidence="1">
    <location>
        <begin position="413"/>
        <end position="417"/>
    </location>
    <ligand>
        <name>IMP</name>
        <dbReference type="ChEBI" id="CHEBI:58053"/>
    </ligand>
</feature>
<feature type="binding site" evidence="1">
    <location>
        <position position="447"/>
    </location>
    <ligand>
        <name>IMP</name>
        <dbReference type="ChEBI" id="CHEBI:58053"/>
    </ligand>
</feature>
<feature type="binding site" evidence="1">
    <location>
        <position position="506"/>
    </location>
    <ligand>
        <name>K(+)</name>
        <dbReference type="ChEBI" id="CHEBI:29103"/>
        <note>ligand shared between two tetrameric partners</note>
    </ligand>
</feature>
<feature type="binding site" evidence="1">
    <location>
        <position position="507"/>
    </location>
    <ligand>
        <name>K(+)</name>
        <dbReference type="ChEBI" id="CHEBI:29103"/>
        <note>ligand shared between two tetrameric partners</note>
    </ligand>
</feature>
<feature type="binding site" evidence="1">
    <location>
        <position position="508"/>
    </location>
    <ligand>
        <name>K(+)</name>
        <dbReference type="ChEBI" id="CHEBI:29103"/>
        <note>ligand shared between two tetrameric partners</note>
    </ligand>
</feature>
<comment type="function">
    <text evidence="1 2">Catalyzes the conversion of inosine 5'-phosphate (IMP) to xanthosine 5'-phosphate (XMP), the first committed and rate-limiting step in the de novo synthesis of guanine nucleotides, and therefore plays an important role in the regulation of cell growth.</text>
</comment>
<comment type="catalytic activity">
    <reaction evidence="1">
        <text>IMP + NAD(+) + H2O = XMP + NADH + H(+)</text>
        <dbReference type="Rhea" id="RHEA:11708"/>
        <dbReference type="ChEBI" id="CHEBI:15377"/>
        <dbReference type="ChEBI" id="CHEBI:15378"/>
        <dbReference type="ChEBI" id="CHEBI:57464"/>
        <dbReference type="ChEBI" id="CHEBI:57540"/>
        <dbReference type="ChEBI" id="CHEBI:57945"/>
        <dbReference type="ChEBI" id="CHEBI:58053"/>
        <dbReference type="EC" id="1.1.1.205"/>
    </reaction>
</comment>
<comment type="cofactor">
    <cofactor evidence="1">
        <name>K(+)</name>
        <dbReference type="ChEBI" id="CHEBI:29103"/>
    </cofactor>
</comment>
<comment type="activity regulation">
    <text evidence="1 2">Mycophenolic acid (MPA) is a non-competitive inhibitor that prevents formation of the closed enzyme conformation by binding to the same site as the amobile flap. In contrast, mizoribine monophosphate (MZP) is a competitive inhibitor that induces the closed conformation. MPA is a potent inhibitor of mammalian IMPDHs but a poor inhibitor of the bacterial enzymes. MZP is a more potent inhibitor of bacterial IMPDH. Potently inhibited by MPA.</text>
</comment>
<comment type="pathway">
    <text evidence="1">Purine metabolism; XMP biosynthesis via de novo pathway; XMP from IMP: step 1/1.</text>
</comment>
<comment type="subunit">
    <text evidence="1">Homotetramer.</text>
</comment>
<comment type="subcellular location">
    <subcellularLocation>
        <location evidence="1">Cytoplasm</location>
    </subcellularLocation>
</comment>
<comment type="developmental stage">
    <text>Expressed at equal levels in the yeast or hyphal form.</text>
</comment>
<comment type="similarity">
    <text evidence="1">Belongs to the IMPDH/GMPR family.</text>
</comment>
<gene>
    <name type="primary">IMH3</name>
    <name type="synonym">IMD3</name>
</gene>
<dbReference type="EC" id="1.1.1.205" evidence="1"/>
<dbReference type="EMBL" id="U85049">
    <property type="protein sequence ID" value="AAB51509.1"/>
    <property type="molecule type" value="Genomic_DNA"/>
</dbReference>
<dbReference type="SMR" id="O00086"/>
<dbReference type="EnsemblFungi" id="C2_06390C_A-T">
    <property type="protein sequence ID" value="C2_06390C_A-T-p1"/>
    <property type="gene ID" value="C2_06390C_A"/>
</dbReference>
<dbReference type="VEuPathDB" id="FungiDB:C2_06390C_A"/>
<dbReference type="VEuPathDB" id="FungiDB:CAWG_04382"/>
<dbReference type="PhylomeDB" id="O00086"/>
<dbReference type="UniPathway" id="UPA00601">
    <property type="reaction ID" value="UER00295"/>
</dbReference>
<dbReference type="GO" id="GO:0005737">
    <property type="term" value="C:cytoplasm"/>
    <property type="evidence" value="ECO:0007669"/>
    <property type="project" value="UniProtKB-SubCell"/>
</dbReference>
<dbReference type="GO" id="GO:0003938">
    <property type="term" value="F:IMP dehydrogenase activity"/>
    <property type="evidence" value="ECO:0007669"/>
    <property type="project" value="UniProtKB-UniRule"/>
</dbReference>
<dbReference type="GO" id="GO:0046872">
    <property type="term" value="F:metal ion binding"/>
    <property type="evidence" value="ECO:0007669"/>
    <property type="project" value="UniProtKB-UniRule"/>
</dbReference>
<dbReference type="GO" id="GO:0000166">
    <property type="term" value="F:nucleotide binding"/>
    <property type="evidence" value="ECO:0007669"/>
    <property type="project" value="UniProtKB-UniRule"/>
</dbReference>
<dbReference type="GO" id="GO:0006177">
    <property type="term" value="P:GMP biosynthetic process"/>
    <property type="evidence" value="ECO:0007669"/>
    <property type="project" value="UniProtKB-UniRule"/>
</dbReference>
<dbReference type="GO" id="GO:0006183">
    <property type="term" value="P:GTP biosynthetic process"/>
    <property type="evidence" value="ECO:0007669"/>
    <property type="project" value="TreeGrafter"/>
</dbReference>
<dbReference type="CDD" id="cd04601">
    <property type="entry name" value="CBS_pair_IMPDH"/>
    <property type="match status" value="1"/>
</dbReference>
<dbReference type="CDD" id="cd00381">
    <property type="entry name" value="IMPDH"/>
    <property type="match status" value="1"/>
</dbReference>
<dbReference type="FunFam" id="3.20.20.70:FF:000007">
    <property type="entry name" value="Chromosome 19 SCAF14664, whole genome shotgun sequence"/>
    <property type="match status" value="1"/>
</dbReference>
<dbReference type="Gene3D" id="3.20.20.70">
    <property type="entry name" value="Aldolase class I"/>
    <property type="match status" value="1"/>
</dbReference>
<dbReference type="HAMAP" id="MF_01964">
    <property type="entry name" value="IMPDH"/>
    <property type="match status" value="1"/>
</dbReference>
<dbReference type="InterPro" id="IPR013785">
    <property type="entry name" value="Aldolase_TIM"/>
</dbReference>
<dbReference type="InterPro" id="IPR000644">
    <property type="entry name" value="CBS_dom"/>
</dbReference>
<dbReference type="InterPro" id="IPR046342">
    <property type="entry name" value="CBS_dom_sf"/>
</dbReference>
<dbReference type="InterPro" id="IPR005990">
    <property type="entry name" value="IMP_DH"/>
</dbReference>
<dbReference type="InterPro" id="IPR015875">
    <property type="entry name" value="IMP_DH/GMP_Rdtase_CS"/>
</dbReference>
<dbReference type="InterPro" id="IPR001093">
    <property type="entry name" value="IMP_DH_GMPRt"/>
</dbReference>
<dbReference type="NCBIfam" id="TIGR01302">
    <property type="entry name" value="IMP_dehydrog"/>
    <property type="match status" value="1"/>
</dbReference>
<dbReference type="PANTHER" id="PTHR11911:SF111">
    <property type="entry name" value="INOSINE-5'-MONOPHOSPHATE DEHYDROGENASE"/>
    <property type="match status" value="1"/>
</dbReference>
<dbReference type="PANTHER" id="PTHR11911">
    <property type="entry name" value="INOSINE-5-MONOPHOSPHATE DEHYDROGENASE RELATED"/>
    <property type="match status" value="1"/>
</dbReference>
<dbReference type="Pfam" id="PF00571">
    <property type="entry name" value="CBS"/>
    <property type="match status" value="2"/>
</dbReference>
<dbReference type="Pfam" id="PF00478">
    <property type="entry name" value="IMPDH"/>
    <property type="match status" value="1"/>
</dbReference>
<dbReference type="PIRSF" id="PIRSF000130">
    <property type="entry name" value="IMPDH"/>
    <property type="match status" value="1"/>
</dbReference>
<dbReference type="SMART" id="SM00116">
    <property type="entry name" value="CBS"/>
    <property type="match status" value="2"/>
</dbReference>
<dbReference type="SMART" id="SM01240">
    <property type="entry name" value="IMPDH"/>
    <property type="match status" value="1"/>
</dbReference>
<dbReference type="SUPFAM" id="SSF54631">
    <property type="entry name" value="CBS-domain pair"/>
    <property type="match status" value="1"/>
</dbReference>
<dbReference type="SUPFAM" id="SSF51412">
    <property type="entry name" value="Inosine monophosphate dehydrogenase (IMPDH)"/>
    <property type="match status" value="1"/>
</dbReference>
<dbReference type="PROSITE" id="PS51371">
    <property type="entry name" value="CBS"/>
    <property type="match status" value="2"/>
</dbReference>
<dbReference type="PROSITE" id="PS00487">
    <property type="entry name" value="IMP_DH_GMP_RED"/>
    <property type="match status" value="1"/>
</dbReference>
<proteinExistence type="evidence at transcript level"/>
<keyword id="KW-0129">CBS domain</keyword>
<keyword id="KW-0963">Cytoplasm</keyword>
<keyword id="KW-0332">GMP biosynthesis</keyword>
<keyword id="KW-0479">Metal-binding</keyword>
<keyword id="KW-0520">NAD</keyword>
<keyword id="KW-0560">Oxidoreductase</keyword>
<keyword id="KW-0630">Potassium</keyword>
<keyword id="KW-0658">Purine biosynthesis</keyword>
<keyword id="KW-0677">Repeat</keyword>
<organism>
    <name type="scientific">Candida albicans</name>
    <name type="common">Yeast</name>
    <dbReference type="NCBI Taxonomy" id="5476"/>
    <lineage>
        <taxon>Eukaryota</taxon>
        <taxon>Fungi</taxon>
        <taxon>Dikarya</taxon>
        <taxon>Ascomycota</taxon>
        <taxon>Saccharomycotina</taxon>
        <taxon>Pichiomycetes</taxon>
        <taxon>Debaryomycetaceae</taxon>
        <taxon>Candida/Lodderomyces clade</taxon>
        <taxon>Candida</taxon>
    </lineage>
</organism>
<sequence length="521" mass="56239">MVFETSKATSYLKDYPKKDGLSVKELIDSTNFGGLTYNDFLILPGLINFPSSAVSLETKLTKKITLKSPFVSSPMDTVTEENMAIHMALLGGIGIIHHNCTSEEQAEMVRKVKKYENGFINDPVVISPEVTVGEVKKMGEVLGFTSFPVTENGKVGGKLVGIITSRDIQFHEDNKSPVSEVMTKDLVVGKKGISLTDGNELLRSSKKGKLPIVDAEGNLVSLISRTDLQKNQDYPNASKSFHSKQLLCGAAIGTIDADRERLDKLVEAGLDVVVLDSSNGSSVFQLNMIKWIKEKYPELQVIAGNVVTREQAALLIEAGADALRIGMGSGSICITQEVMACGRPQGTAVYGVTEFANKFGVPCIADGGIGNIGHITKALALGASCVMMGGLLAGTAETPGDYFYRDGKRLKTYRGMGSIDAMQQTNTNANASTSRYFSEADKVLVAQGVSGSVVDKGSITKFVPYLYNGLQHSLQDIGIKSIDELRENVDNGEIRFEFRTASAQFEGGVHGLHSYEKRLHN</sequence>
<name>IMDH_CANAX</name>
<reference key="1">
    <citation type="journal article" date="1997" name="J. Bacteriol.">
        <title>Overexpression of a cloned IMP dehydrogenase gene of Candida albicans confers resistance to the specific inhibitor mycophenolic acid.</title>
        <authorList>
            <person name="Koehler G.A."/>
            <person name="White T.C."/>
            <person name="Agabian N."/>
        </authorList>
    </citation>
    <scope>NUCLEOTIDE SEQUENCE [GENOMIC DNA]</scope>
    <scope>FUNCTION</scope>
    <scope>ACTIVITY REGULATION</scope>
    <source>
        <strain>SS</strain>
    </source>
</reference>
<accession>O00086</accession>
<evidence type="ECO:0000255" key="1">
    <source>
        <dbReference type="HAMAP-Rule" id="MF_03156"/>
    </source>
</evidence>
<evidence type="ECO:0000269" key="2">
    <source>
    </source>
</evidence>
<protein>
    <recommendedName>
        <fullName evidence="1">Inosine-5'-monophosphate dehydrogenase</fullName>
        <shortName evidence="1">IMP dehydrogenase</shortName>
        <shortName evidence="1">IMPD</shortName>
        <shortName evidence="1">IMPDH</shortName>
        <ecNumber evidence="1">1.1.1.205</ecNumber>
    </recommendedName>
</protein>